<keyword id="KW-0997">Cell inner membrane</keyword>
<keyword id="KW-1003">Cell membrane</keyword>
<keyword id="KW-0249">Electron transport</keyword>
<keyword id="KW-0472">Membrane</keyword>
<keyword id="KW-1278">Translocase</keyword>
<keyword id="KW-0812">Transmembrane</keyword>
<keyword id="KW-1133">Transmembrane helix</keyword>
<keyword id="KW-0813">Transport</keyword>
<evidence type="ECO:0000255" key="1">
    <source>
        <dbReference type="HAMAP-Rule" id="MF_00459"/>
    </source>
</evidence>
<dbReference type="EC" id="7.-.-.-" evidence="1"/>
<dbReference type="EMBL" id="FM200053">
    <property type="protein sequence ID" value="CAR59469.1"/>
    <property type="molecule type" value="Genomic_DNA"/>
</dbReference>
<dbReference type="RefSeq" id="WP_000133179.1">
    <property type="nucleotide sequence ID" value="NC_011147.1"/>
</dbReference>
<dbReference type="SMR" id="B5BKB0"/>
<dbReference type="GeneID" id="66755900"/>
<dbReference type="KEGG" id="sek:SSPA1294"/>
<dbReference type="HOGENOM" id="CLU_095255_1_0_6"/>
<dbReference type="Proteomes" id="UP000001869">
    <property type="component" value="Chromosome"/>
</dbReference>
<dbReference type="GO" id="GO:0005886">
    <property type="term" value="C:plasma membrane"/>
    <property type="evidence" value="ECO:0007669"/>
    <property type="project" value="UniProtKB-SubCell"/>
</dbReference>
<dbReference type="GO" id="GO:0022900">
    <property type="term" value="P:electron transport chain"/>
    <property type="evidence" value="ECO:0007669"/>
    <property type="project" value="UniProtKB-UniRule"/>
</dbReference>
<dbReference type="HAMAP" id="MF_00459">
    <property type="entry name" value="RsxA_RnfA"/>
    <property type="match status" value="1"/>
</dbReference>
<dbReference type="InterPro" id="IPR011293">
    <property type="entry name" value="Ion_transpt_RnfA/RsxA"/>
</dbReference>
<dbReference type="InterPro" id="IPR003667">
    <property type="entry name" value="NqrDE/RnfAE"/>
</dbReference>
<dbReference type="InterPro" id="IPR050133">
    <property type="entry name" value="NqrDE/RnfAE_oxidrdctase"/>
</dbReference>
<dbReference type="NCBIfam" id="NF003481">
    <property type="entry name" value="PRK05151.1"/>
    <property type="match status" value="1"/>
</dbReference>
<dbReference type="NCBIfam" id="TIGR01943">
    <property type="entry name" value="rnfA"/>
    <property type="match status" value="1"/>
</dbReference>
<dbReference type="PANTHER" id="PTHR30335">
    <property type="entry name" value="INTEGRAL MEMBRANE PROTEIN OF SOXR-REDUCING COMPLEX"/>
    <property type="match status" value="1"/>
</dbReference>
<dbReference type="PANTHER" id="PTHR30335:SF0">
    <property type="entry name" value="ION-TRANSLOCATING OXIDOREDUCTASE COMPLEX SUBUNIT A"/>
    <property type="match status" value="1"/>
</dbReference>
<dbReference type="Pfam" id="PF02508">
    <property type="entry name" value="Rnf-Nqr"/>
    <property type="match status" value="1"/>
</dbReference>
<dbReference type="PIRSF" id="PIRSF006102">
    <property type="entry name" value="NQR_DE"/>
    <property type="match status" value="1"/>
</dbReference>
<gene>
    <name evidence="1" type="primary">rsxA</name>
    <name type="ordered locus">SSPA1294</name>
</gene>
<accession>B5BKB0</accession>
<protein>
    <recommendedName>
        <fullName evidence="1">Ion-translocating oxidoreductase complex subunit A</fullName>
        <ecNumber evidence="1">7.-.-.-</ecNumber>
    </recommendedName>
    <alternativeName>
        <fullName evidence="1">Rsx electron transport complex subunit A</fullName>
    </alternativeName>
</protein>
<comment type="function">
    <text evidence="1">Part of a membrane-bound complex that couples electron transfer with translocation of ions across the membrane. Required to maintain the reduced state of SoxR.</text>
</comment>
<comment type="subunit">
    <text evidence="1">The complex is composed of six subunits: RsxA, RsxB, RsxC, RsxD, RsxE and RsxG.</text>
</comment>
<comment type="subcellular location">
    <subcellularLocation>
        <location evidence="1">Cell inner membrane</location>
        <topology evidence="1">Multi-pass membrane protein</topology>
    </subcellularLocation>
</comment>
<comment type="similarity">
    <text evidence="1">Belongs to the NqrDE/RnfAE family.</text>
</comment>
<name>RSXA_SALPK</name>
<organism>
    <name type="scientific">Salmonella paratyphi A (strain AKU_12601)</name>
    <dbReference type="NCBI Taxonomy" id="554290"/>
    <lineage>
        <taxon>Bacteria</taxon>
        <taxon>Pseudomonadati</taxon>
        <taxon>Pseudomonadota</taxon>
        <taxon>Gammaproteobacteria</taxon>
        <taxon>Enterobacterales</taxon>
        <taxon>Enterobacteriaceae</taxon>
        <taxon>Salmonella</taxon>
    </lineage>
</organism>
<reference key="1">
    <citation type="journal article" date="2009" name="BMC Genomics">
        <title>Pseudogene accumulation in the evolutionary histories of Salmonella enterica serovars Paratyphi A and Typhi.</title>
        <authorList>
            <person name="Holt K.E."/>
            <person name="Thomson N.R."/>
            <person name="Wain J."/>
            <person name="Langridge G.C."/>
            <person name="Hasan R."/>
            <person name="Bhutta Z.A."/>
            <person name="Quail M.A."/>
            <person name="Norbertczak H."/>
            <person name="Walker D."/>
            <person name="Simmonds M."/>
            <person name="White B."/>
            <person name="Bason N."/>
            <person name="Mungall K."/>
            <person name="Dougan G."/>
            <person name="Parkhill J."/>
        </authorList>
    </citation>
    <scope>NUCLEOTIDE SEQUENCE [LARGE SCALE GENOMIC DNA]</scope>
    <source>
        <strain>AKU_12601</strain>
    </source>
</reference>
<sequence>MTDYLLLFVGTVLVNNFVLVKFLGLCPFMGVSKKLETAMGMGLATTFVMTLASICAWLIDTWILIPLDLIYLRTLAFILVIAVVVQFTEMVVRKTSPALYRLLGIFLPLITTNCAVLGVALLNINLGHHFLQSALYGFSAAVGFSLVMVLFAAIRERLAVADVPAPFRGNAIALITAGLMSLAFMGFSGLVKL</sequence>
<feature type="chain" id="PRO_1000191737" description="Ion-translocating oxidoreductase complex subunit A">
    <location>
        <begin position="1"/>
        <end position="193"/>
    </location>
</feature>
<feature type="transmembrane region" description="Helical" evidence="1">
    <location>
        <begin position="5"/>
        <end position="25"/>
    </location>
</feature>
<feature type="transmembrane region" description="Helical" evidence="1">
    <location>
        <begin position="47"/>
        <end position="67"/>
    </location>
</feature>
<feature type="transmembrane region" description="Helical" evidence="1">
    <location>
        <begin position="72"/>
        <end position="92"/>
    </location>
</feature>
<feature type="transmembrane region" description="Helical" evidence="1">
    <location>
        <begin position="102"/>
        <end position="122"/>
    </location>
</feature>
<feature type="transmembrane region" description="Helical" evidence="1">
    <location>
        <begin position="134"/>
        <end position="154"/>
    </location>
</feature>
<feature type="transmembrane region" description="Helical" evidence="1">
    <location>
        <begin position="171"/>
        <end position="191"/>
    </location>
</feature>
<proteinExistence type="inferred from homology"/>